<accession>A0NAZ8</accession>
<sequence>MATTIARIGSANWAKLLVLLWLVQLATAGEPNPACKTLPTVDKDNEDKCCDVPEMFPNETLNACMEEHQQSSKPPLQKSCEITTCVLKKQSLIKSDNTVDKDKIKSYIKEMVKGSDEWKTLVEKAVLEECLPLMDKDPSNVLSKLKSSLGDCDPAPALTIACAAAKFYVNCPAKDRTKSPMCDEWRTFLSKCSNSLEDLNAIFMVLENQKTR</sequence>
<dbReference type="EMBL" id="AAAB01007900">
    <property type="protein sequence ID" value="EAU77839.1"/>
    <property type="molecule type" value="Genomic_DNA"/>
</dbReference>
<dbReference type="RefSeq" id="XP_001230506.1">
    <property type="nucleotide sequence ID" value="XM_001230505.1"/>
</dbReference>
<dbReference type="SMR" id="A0NAZ8"/>
<dbReference type="FunCoup" id="A0NAZ8">
    <property type="interactions" value="24"/>
</dbReference>
<dbReference type="PaxDb" id="7165-AGAP012658-PA"/>
<dbReference type="EnsemblMetazoa" id="AGAP012658-RA">
    <property type="protein sequence ID" value="AGAP012658-PA"/>
    <property type="gene ID" value="AGAP012658"/>
</dbReference>
<dbReference type="GeneID" id="4397686"/>
<dbReference type="KEGG" id="aga:4397686"/>
<dbReference type="VEuPathDB" id="VectorBase:AGAMI1_011769"/>
<dbReference type="VEuPathDB" id="VectorBase:AGAP012658"/>
<dbReference type="eggNOG" id="ENOG502TB1Q">
    <property type="taxonomic scope" value="Eukaryota"/>
</dbReference>
<dbReference type="HOGENOM" id="CLU_1251594_0_0_1"/>
<dbReference type="InParanoid" id="A0NAZ8"/>
<dbReference type="OMA" id="GPPDCSK"/>
<dbReference type="PhylomeDB" id="A0NAZ8"/>
<dbReference type="Proteomes" id="UP000007062">
    <property type="component" value="Unassembled WGS sequence"/>
</dbReference>
<dbReference type="GO" id="GO:0005576">
    <property type="term" value="C:extracellular region"/>
    <property type="evidence" value="ECO:0007669"/>
    <property type="project" value="UniProtKB-SubCell"/>
</dbReference>
<dbReference type="GO" id="GO:0005549">
    <property type="term" value="F:odorant binding"/>
    <property type="evidence" value="ECO:0007669"/>
    <property type="project" value="InterPro"/>
</dbReference>
<dbReference type="GO" id="GO:0007608">
    <property type="term" value="P:sensory perception of smell"/>
    <property type="evidence" value="ECO:0007669"/>
    <property type="project" value="UniProtKB-KW"/>
</dbReference>
<dbReference type="Gene3D" id="1.10.238.270">
    <property type="match status" value="1"/>
</dbReference>
<dbReference type="InterPro" id="IPR054577">
    <property type="entry name" value="OBP47-like_dom"/>
</dbReference>
<dbReference type="InterPro" id="IPR052295">
    <property type="entry name" value="Odorant-binding_protein"/>
</dbReference>
<dbReference type="InterPro" id="IPR036728">
    <property type="entry name" value="PBP_GOBP_sf"/>
</dbReference>
<dbReference type="PANTHER" id="PTHR21066:SF15">
    <property type="entry name" value="GH25962P-RELATED"/>
    <property type="match status" value="1"/>
</dbReference>
<dbReference type="PANTHER" id="PTHR21066">
    <property type="entry name" value="ODORANT-BINDING PROTEIN 59A-RELATED"/>
    <property type="match status" value="1"/>
</dbReference>
<dbReference type="Pfam" id="PF22651">
    <property type="entry name" value="OBP47_like"/>
    <property type="match status" value="1"/>
</dbReference>
<dbReference type="SUPFAM" id="SSF47565">
    <property type="entry name" value="Insect pheromone/odorant-binding proteins"/>
    <property type="match status" value="1"/>
</dbReference>
<feature type="signal peptide" evidence="2">
    <location>
        <begin position="1"/>
        <end position="28"/>
    </location>
</feature>
<feature type="chain" id="PRO_0000430408" description="General odorant-binding protein 68">
    <location>
        <begin position="29"/>
        <end position="212"/>
    </location>
</feature>
<feature type="disulfide bond" evidence="1">
    <location>
        <begin position="64"/>
        <end position="85"/>
    </location>
</feature>
<feature type="disulfide bond" evidence="1">
    <location>
        <begin position="80"/>
        <end position="152"/>
    </location>
</feature>
<feature type="disulfide bond" evidence="1">
    <location>
        <begin position="130"/>
        <end position="162"/>
    </location>
</feature>
<keyword id="KW-1015">Disulfide bond</keyword>
<keyword id="KW-0552">Olfaction</keyword>
<keyword id="KW-1185">Reference proteome</keyword>
<keyword id="KW-0964">Secreted</keyword>
<keyword id="KW-0716">Sensory transduction</keyword>
<keyword id="KW-0732">Signal</keyword>
<keyword id="KW-0813">Transport</keyword>
<gene>
    <name type="primary">Obp68</name>
    <name type="ORF">AGAP012658</name>
</gene>
<organism>
    <name type="scientific">Anopheles gambiae</name>
    <name type="common">African malaria mosquito</name>
    <dbReference type="NCBI Taxonomy" id="7165"/>
    <lineage>
        <taxon>Eukaryota</taxon>
        <taxon>Metazoa</taxon>
        <taxon>Ecdysozoa</taxon>
        <taxon>Arthropoda</taxon>
        <taxon>Hexapoda</taxon>
        <taxon>Insecta</taxon>
        <taxon>Pterygota</taxon>
        <taxon>Neoptera</taxon>
        <taxon>Endopterygota</taxon>
        <taxon>Diptera</taxon>
        <taxon>Nematocera</taxon>
        <taxon>Culicoidea</taxon>
        <taxon>Culicidae</taxon>
        <taxon>Anophelinae</taxon>
        <taxon>Anopheles</taxon>
    </lineage>
</organism>
<name>OBP68_ANOGA</name>
<evidence type="ECO:0000250" key="1"/>
<evidence type="ECO:0000255" key="2"/>
<evidence type="ECO:0000305" key="3"/>
<proteinExistence type="inferred from homology"/>
<protein>
    <recommendedName>
        <fullName>General odorant-binding protein 68</fullName>
    </recommendedName>
</protein>
<comment type="function">
    <text evidence="1">Present in the aqueous fluid surrounding olfactory sensory dendrites and are thought to aid in the capture and transport of hydrophobic odorants into and through this fluid.</text>
</comment>
<comment type="subcellular location">
    <subcellularLocation>
        <location evidence="1">Secreted</location>
    </subcellularLocation>
</comment>
<comment type="similarity">
    <text evidence="3">Belongs to the PBP/GOBP family.</text>
</comment>
<reference key="1">
    <citation type="journal article" date="2002" name="Science">
        <title>The genome sequence of the malaria mosquito Anopheles gambiae.</title>
        <authorList>
            <person name="Holt R.A."/>
            <person name="Subramanian G.M."/>
            <person name="Halpern A."/>
            <person name="Sutton G.G."/>
            <person name="Charlab R."/>
            <person name="Nusskern D.R."/>
            <person name="Wincker P."/>
            <person name="Clark A.G."/>
            <person name="Ribeiro J.M.C."/>
            <person name="Wides R."/>
            <person name="Salzberg S.L."/>
            <person name="Loftus B.J."/>
            <person name="Yandell M.D."/>
            <person name="Majoros W.H."/>
            <person name="Rusch D.B."/>
            <person name="Lai Z."/>
            <person name="Kraft C.L."/>
            <person name="Abril J.F."/>
            <person name="Anthouard V."/>
            <person name="Arensburger P."/>
            <person name="Atkinson P.W."/>
            <person name="Baden H."/>
            <person name="de Berardinis V."/>
            <person name="Baldwin D."/>
            <person name="Benes V."/>
            <person name="Biedler J."/>
            <person name="Blass C."/>
            <person name="Bolanos R."/>
            <person name="Boscus D."/>
            <person name="Barnstead M."/>
            <person name="Cai S."/>
            <person name="Center A."/>
            <person name="Chaturverdi K."/>
            <person name="Christophides G.K."/>
            <person name="Chrystal M.A.M."/>
            <person name="Clamp M."/>
            <person name="Cravchik A."/>
            <person name="Curwen V."/>
            <person name="Dana A."/>
            <person name="Delcher A."/>
            <person name="Dew I."/>
            <person name="Evans C.A."/>
            <person name="Flanigan M."/>
            <person name="Grundschober-Freimoser A."/>
            <person name="Friedli L."/>
            <person name="Gu Z."/>
            <person name="Guan P."/>
            <person name="Guigo R."/>
            <person name="Hillenmeyer M.E."/>
            <person name="Hladun S.L."/>
            <person name="Hogan J.R."/>
            <person name="Hong Y.S."/>
            <person name="Hoover J."/>
            <person name="Jaillon O."/>
            <person name="Ke Z."/>
            <person name="Kodira C.D."/>
            <person name="Kokoza E."/>
            <person name="Koutsos A."/>
            <person name="Letunic I."/>
            <person name="Levitsky A.A."/>
            <person name="Liang Y."/>
            <person name="Lin J.-J."/>
            <person name="Lobo N.F."/>
            <person name="Lopez J.R."/>
            <person name="Malek J.A."/>
            <person name="McIntosh T.C."/>
            <person name="Meister S."/>
            <person name="Miller J.R."/>
            <person name="Mobarry C."/>
            <person name="Mongin E."/>
            <person name="Murphy S.D."/>
            <person name="O'Brochta D.A."/>
            <person name="Pfannkoch C."/>
            <person name="Qi R."/>
            <person name="Regier M.A."/>
            <person name="Remington K."/>
            <person name="Shao H."/>
            <person name="Sharakhova M.V."/>
            <person name="Sitter C.D."/>
            <person name="Shetty J."/>
            <person name="Smith T.J."/>
            <person name="Strong R."/>
            <person name="Sun J."/>
            <person name="Thomasova D."/>
            <person name="Ton L.Q."/>
            <person name="Topalis P."/>
            <person name="Tu Z.J."/>
            <person name="Unger M.F."/>
            <person name="Walenz B."/>
            <person name="Wang A.H."/>
            <person name="Wang J."/>
            <person name="Wang M."/>
            <person name="Wang X."/>
            <person name="Woodford K.J."/>
            <person name="Wortman J.R."/>
            <person name="Wu M."/>
            <person name="Yao A."/>
            <person name="Zdobnov E.M."/>
            <person name="Zhang H."/>
            <person name="Zhao Q."/>
            <person name="Zhao S."/>
            <person name="Zhu S.C."/>
            <person name="Zhimulev I."/>
            <person name="Coluzzi M."/>
            <person name="della Torre A."/>
            <person name="Roth C.W."/>
            <person name="Louis C."/>
            <person name="Kalush F."/>
            <person name="Mural R.J."/>
            <person name="Myers E.W."/>
            <person name="Adams M.D."/>
            <person name="Smith H.O."/>
            <person name="Broder S."/>
            <person name="Gardner M.J."/>
            <person name="Fraser C.M."/>
            <person name="Birney E."/>
            <person name="Bork P."/>
            <person name="Brey P.T."/>
            <person name="Venter J.C."/>
            <person name="Weissenbach J."/>
            <person name="Kafatos F.C."/>
            <person name="Collins F.H."/>
            <person name="Hoffman S.L."/>
        </authorList>
    </citation>
    <scope>NUCLEOTIDE SEQUENCE [LARGE SCALE GENOMIC DNA]</scope>
    <source>
        <strain>PEST</strain>
    </source>
</reference>
<reference key="2">
    <citation type="journal article" date="2013" name="Genome Biol. Evol.">
        <title>Comparative genomics of odorant binding proteins in Anopheles gambiae, Aedes aegypti, and Culex quinquefasciatus.</title>
        <authorList>
            <person name="Manoharan M."/>
            <person name="Ng Fuk Chong M."/>
            <person name="Vaitinadapoule A."/>
            <person name="Frumence E."/>
            <person name="Sowdhamini R."/>
            <person name="Offmann B."/>
        </authorList>
    </citation>
    <scope>IDENTIFICATION</scope>
</reference>